<gene>
    <name type="primary">MZB1</name>
    <name type="synonym">MEDA7</name>
    <name type="synonym">PACAP</name>
    <name type="ORF">HSPC190</name>
</gene>
<proteinExistence type="evidence at protein level"/>
<accession>Q8WU39</accession>
<accession>D2IYS0</accession>
<accession>Q7Z6N2</accession>
<accession>Q96RL5</accession>
<accession>Q9P0T3</accession>
<feature type="signal peptide" evidence="2">
    <location>
        <begin position="1"/>
        <end position="22"/>
    </location>
</feature>
<feature type="chain" id="PRO_0000318740" description="Marginal zone B- and B1-cell-specific protein">
    <location>
        <begin position="23"/>
        <end position="189"/>
    </location>
</feature>
<feature type="short sequence motif" description="Prevents secretion from ER" evidence="3">
    <location>
        <begin position="186"/>
        <end position="189"/>
    </location>
</feature>
<feature type="disulfide bond" evidence="1">
    <location>
        <begin position="50"/>
        <end position="178"/>
    </location>
</feature>
<feature type="disulfide bond" evidence="1">
    <location>
        <begin position="53"/>
        <end position="171"/>
    </location>
</feature>
<feature type="disulfide bond" evidence="1">
    <location>
        <begin position="95"/>
        <end position="143"/>
    </location>
</feature>
<feature type="splice variant" id="VSP_031280" description="In isoform 3." evidence="10">
    <location>
        <begin position="1"/>
        <end position="92"/>
    </location>
</feature>
<feature type="splice variant" id="VSP_031281" description="In isoform 2." evidence="9">
    <original>MWQNLAKAETKLHTSNSGGRRELSELVYTDVLDRSCSRNWQDYGVREVDQVKRLTGPGLSEGPEPSISVMVTGGPWPTRLSRTCLHYLGEFGEDQIYEAHQQGRGALEALLCGGPQGACSEKVSATREEL</original>
    <variation>SLLVPDVAKSGKGRDQTSYLKLWGAAGAERVGLHGCPGPELLPELAGLRSSRSGPSETSHRPRT</variation>
    <location>
        <begin position="60"/>
        <end position="189"/>
    </location>
</feature>
<feature type="splice variant" id="VSP_038333" description="In isoform 4." evidence="8">
    <original>MWQNLAKAETKLHTSN</original>
    <variation>RLCSYPPHLPLTEQQS</variation>
    <location>
        <begin position="60"/>
        <end position="75"/>
    </location>
</feature>
<feature type="splice variant" id="VSP_039073" description="In isoform 5." evidence="11">
    <original>MWQ</original>
    <variation>AHP</variation>
    <location>
        <begin position="60"/>
        <end position="62"/>
    </location>
</feature>
<feature type="splice variant" id="VSP_039074" description="In isoform 5." evidence="11">
    <location>
        <begin position="63"/>
        <end position="189"/>
    </location>
</feature>
<feature type="splice variant" id="VSP_038334" description="In isoform 4." evidence="8">
    <location>
        <begin position="76"/>
        <end position="189"/>
    </location>
</feature>
<feature type="splice variant" id="VSP_038332" description="In isoform 3." evidence="10">
    <original>RSCSRNWQD</original>
    <variation>MPAELWLTS</variation>
    <location>
        <begin position="93"/>
        <end position="101"/>
    </location>
</feature>
<feature type="mutagenesis site" description="Does not affect activity." evidence="6">
    <original>C</original>
    <variation>S</variation>
    <location>
        <position position="50"/>
    </location>
</feature>
<feature type="mutagenesis site" description="No significant activity." evidence="6">
    <original>C</original>
    <variation>S</variation>
    <location>
        <position position="53"/>
    </location>
</feature>
<feature type="mutagenesis site" description="No significant activity." evidence="6">
    <original>C</original>
    <variation>S</variation>
    <location>
        <position position="95"/>
    </location>
</feature>
<feature type="mutagenesis site" description="No significant activity." evidence="6">
    <original>C</original>
    <variation>S</variation>
    <location>
        <position position="143"/>
    </location>
</feature>
<feature type="mutagenesis site" description="No significant activity." evidence="6">
    <original>C</original>
    <variation>S</variation>
    <location>
        <position position="171"/>
    </location>
</feature>
<feature type="mutagenesis site" description="Does not affect activity." evidence="6">
    <original>C</original>
    <variation>S</variation>
    <location>
        <position position="178"/>
    </location>
</feature>
<feature type="helix" evidence="13">
    <location>
        <begin position="46"/>
        <end position="48"/>
    </location>
</feature>
<feature type="helix" evidence="13">
    <location>
        <begin position="49"/>
        <end position="70"/>
    </location>
</feature>
<feature type="helix" evidence="13">
    <location>
        <begin position="84"/>
        <end position="94"/>
    </location>
</feature>
<feature type="strand" evidence="13">
    <location>
        <begin position="103"/>
        <end position="107"/>
    </location>
</feature>
<feature type="strand" evidence="13">
    <location>
        <begin position="110"/>
        <end position="114"/>
    </location>
</feature>
<feature type="strand" evidence="13">
    <location>
        <begin position="127"/>
        <end position="132"/>
    </location>
</feature>
<feature type="helix" evidence="13">
    <location>
        <begin position="135"/>
        <end position="150"/>
    </location>
</feature>
<feature type="helix" evidence="13">
    <location>
        <begin position="152"/>
        <end position="161"/>
    </location>
</feature>
<feature type="helix" evidence="13">
    <location>
        <begin position="163"/>
        <end position="171"/>
    </location>
</feature>
<comment type="function">
    <text evidence="1 4 7">Associates with immunoglobulin M (IgM) heavy and light chains and promotes IgM assembly and secretion. May exert its effect by acting as a molecular chaperone or as an oxidoreductase as it displays a low level of oxidoreductase activity (By similarity). Isoform 2 may be involved in regulation of apoptosis. Helps to diversify peripheral B-cell functions by regulating Ca(2+) stores, antibody secretion and integrin activation.</text>
</comment>
<comment type="function">
    <text>Acts as a hormone-regulated adipokine/pro-inflammatory cytokine that is implicated in causing chronic inflammation, affecting cellular expansion and blunting insulin response in adipocytes. May have a role in the onset of insulin resistance.</text>
</comment>
<comment type="subunit">
    <text evidence="1">Part of the ER chaperone complex, a multi-protein complex in the endoplasmic reticulum containing a large number of molecular chaperones which associates with unassembled incompletely folded immunoglobulin heavy chains (By similarity). Isoform 2 interacts with CASP2 and CASP9. Interacts with HSP90B1 and PDIA3 in a calcium-dependent manner (By similarity).</text>
</comment>
<comment type="interaction">
    <interactant intactId="EBI-7212043">
        <id>Q8WU39</id>
    </interactant>
    <interactant intactId="EBI-346882">
        <id>Q99816</id>
        <label>TSG101</label>
    </interactant>
    <organismsDiffer>false</organismsDiffer>
    <experiments>3</experiments>
</comment>
<comment type="subcellular location">
    <molecule>Isoform 1</molecule>
    <subcellularLocation>
        <location evidence="6">Endoplasmic reticulum lumen</location>
    </subcellularLocation>
    <subcellularLocation>
        <location evidence="7">Secreted</location>
    </subcellularLocation>
</comment>
<comment type="subcellular location">
    <molecule>Isoform 2</molecule>
    <subcellularLocation>
        <location evidence="4">Cytoplasm</location>
    </subcellularLocation>
    <text>Diffuse granular localization in the cytoplasm surrounding the nucleus (PubMed:11350957).</text>
</comment>
<comment type="alternative products">
    <event type="alternative splicing"/>
    <isoform>
        <id>Q8WU39-1</id>
        <name>1</name>
        <sequence type="displayed"/>
    </isoform>
    <isoform>
        <id>Q8WU39-2</id>
        <name>2</name>
        <sequence type="described" ref="VSP_031281"/>
    </isoform>
    <isoform>
        <id>Q8WU39-3</id>
        <name>3</name>
        <sequence type="described" ref="VSP_031280 VSP_038332"/>
    </isoform>
    <isoform>
        <id>Q8WU39-4</id>
        <name>4</name>
        <sequence type="described" ref="VSP_038333 VSP_038334"/>
    </isoform>
    <isoform>
        <id>Q8WU39-5</id>
        <name>5</name>
        <sequence type="described" ref="VSP_039073 VSP_039074"/>
    </isoform>
</comment>
<comment type="tissue specificity">
    <text evidence="4 5 6">Widely expressed with highest levels in adult brain, small intestine and lymphoid tissues such as thymus and spleen. Expression is frequently lower in intestinal-type gastric cancer. In obese patients, more abundant in omental than in subcutaneous fat.</text>
</comment>
<comment type="induction">
    <text evidence="4 7">Down-regulated in primary B-cells early after ligand-stimulated activation. Up-regulated in bacterial lipopolysaccharides (LPS)-stimulated peritoneal macrophages.</text>
</comment>
<comment type="PTM">
    <text evidence="1">Forms an interchain disulfide bond with IgM monomers.</text>
</comment>
<comment type="miscellaneous">
    <molecule>Isoform 1</molecule>
    <text>Major.</text>
</comment>
<comment type="similarity">
    <text evidence="12">Belongs to the MZB1 family.</text>
</comment>
<comment type="sequence caution" evidence="12">
    <conflict type="erroneous translation">
        <sequence resource="EMBL-CDS" id="AAF36110"/>
    </conflict>
    <text>Wrong choice of frame.</text>
</comment>
<protein>
    <recommendedName>
        <fullName>Marginal zone B- and B1-cell-specific protein</fullName>
    </recommendedName>
    <alternativeName>
        <fullName>Mesenteric estrogen-dependent adipose 7</fullName>
        <shortName>MEDA-7</shortName>
    </alternativeName>
    <alternativeName>
        <fullName>Plasma cell-induced resident endoplasmic reticulum protein</fullName>
        <shortName>Plasma cell-induced resident ER protein</shortName>
        <shortName>pERp1</shortName>
    </alternativeName>
    <alternativeName>
        <fullName>Proapoptotic caspase adapter protein</fullName>
    </alternativeName>
</protein>
<reference key="1">
    <citation type="journal article" date="2001" name="J. Biol. Chem.">
        <title>Characterization of a novel proapoptotic caspase-2- and caspase-9-binding protein.</title>
        <authorList>
            <person name="Bonfoco E."/>
            <person name="Li E."/>
            <person name="Kolbinger F."/>
            <person name="Cooper N.R."/>
        </authorList>
    </citation>
    <scope>NUCLEOTIDE SEQUENCE [MRNA] (ISOFORM 2)</scope>
    <scope>FUNCTION</scope>
    <scope>SUBCELLULAR LOCATION</scope>
    <scope>TISSUE SPECIFICITY</scope>
    <scope>INDUCTION</scope>
    <scope>INTERACTION WITH CASP2 AND CASP9</scope>
</reference>
<reference key="2">
    <citation type="journal article" date="2000" name="Genome Res.">
        <title>Cloning and functional analysis of cDNAs with open reading frames for 300 previously undefined genes expressed in CD34+ hematopoietic stem/progenitor cells.</title>
        <authorList>
            <person name="Zhang Q.-H."/>
            <person name="Ye M."/>
            <person name="Wu X.-Y."/>
            <person name="Ren S.-X."/>
            <person name="Zhao M."/>
            <person name="Zhao C.-J."/>
            <person name="Fu G."/>
            <person name="Shen Y."/>
            <person name="Fan H.-Y."/>
            <person name="Lu G."/>
            <person name="Zhong M."/>
            <person name="Xu X.-R."/>
            <person name="Han Z.-G."/>
            <person name="Zhang J.-W."/>
            <person name="Tao J."/>
            <person name="Huang Q.-H."/>
            <person name="Zhou J."/>
            <person name="Hu G.-X."/>
            <person name="Gu J."/>
            <person name="Chen S.-J."/>
            <person name="Chen Z."/>
        </authorList>
    </citation>
    <scope>NUCLEOTIDE SEQUENCE [LARGE SCALE MRNA] (ISOFORM 4)</scope>
    <source>
        <tissue>Umbilical cord blood</tissue>
    </source>
</reference>
<reference key="3">
    <citation type="journal article" date="2009" name="Proc. Natl. Acad. Sci. U.S.A.">
        <title>pERp1 is significantly up-regulated during plasma cell differentiation and contributes to the oxidative folding of immunoglobulin.</title>
        <authorList>
            <person name="Shimizu Y."/>
            <person name="Meunier L."/>
            <person name="Hendershot L.M."/>
        </authorList>
    </citation>
    <scope>NUCLEOTIDE SEQUENCE [MRNA] (ISOFORM 1)</scope>
    <scope>SUBCELLULAR LOCATION</scope>
    <scope>TISSUE SPECIFICITY</scope>
    <scope>MUTAGENESIS OF CYS-50; CYS-53; CYS-95; CYS-143; CYS-171 AND CYS-178</scope>
</reference>
<reference key="4">
    <citation type="journal article" date="2004" name="Nat. Genet.">
        <title>Complete sequencing and characterization of 21,243 full-length human cDNAs.</title>
        <authorList>
            <person name="Ota T."/>
            <person name="Suzuki Y."/>
            <person name="Nishikawa T."/>
            <person name="Otsuki T."/>
            <person name="Sugiyama T."/>
            <person name="Irie R."/>
            <person name="Wakamatsu A."/>
            <person name="Hayashi K."/>
            <person name="Sato H."/>
            <person name="Nagai K."/>
            <person name="Kimura K."/>
            <person name="Makita H."/>
            <person name="Sekine M."/>
            <person name="Obayashi M."/>
            <person name="Nishi T."/>
            <person name="Shibahara T."/>
            <person name="Tanaka T."/>
            <person name="Ishii S."/>
            <person name="Yamamoto J."/>
            <person name="Saito K."/>
            <person name="Kawai Y."/>
            <person name="Isono Y."/>
            <person name="Nakamura Y."/>
            <person name="Nagahari K."/>
            <person name="Murakami K."/>
            <person name="Yasuda T."/>
            <person name="Iwayanagi T."/>
            <person name="Wagatsuma M."/>
            <person name="Shiratori A."/>
            <person name="Sudo H."/>
            <person name="Hosoiri T."/>
            <person name="Kaku Y."/>
            <person name="Kodaira H."/>
            <person name="Kondo H."/>
            <person name="Sugawara M."/>
            <person name="Takahashi M."/>
            <person name="Kanda K."/>
            <person name="Yokoi T."/>
            <person name="Furuya T."/>
            <person name="Kikkawa E."/>
            <person name="Omura Y."/>
            <person name="Abe K."/>
            <person name="Kamihara K."/>
            <person name="Katsuta N."/>
            <person name="Sato K."/>
            <person name="Tanikawa M."/>
            <person name="Yamazaki M."/>
            <person name="Ninomiya K."/>
            <person name="Ishibashi T."/>
            <person name="Yamashita H."/>
            <person name="Murakawa K."/>
            <person name="Fujimori K."/>
            <person name="Tanai H."/>
            <person name="Kimata M."/>
            <person name="Watanabe M."/>
            <person name="Hiraoka S."/>
            <person name="Chiba Y."/>
            <person name="Ishida S."/>
            <person name="Ono Y."/>
            <person name="Takiguchi S."/>
            <person name="Watanabe S."/>
            <person name="Yosida M."/>
            <person name="Hotuta T."/>
            <person name="Kusano J."/>
            <person name="Kanehori K."/>
            <person name="Takahashi-Fujii A."/>
            <person name="Hara H."/>
            <person name="Tanase T.-O."/>
            <person name="Nomura Y."/>
            <person name="Togiya S."/>
            <person name="Komai F."/>
            <person name="Hara R."/>
            <person name="Takeuchi K."/>
            <person name="Arita M."/>
            <person name="Imose N."/>
            <person name="Musashino K."/>
            <person name="Yuuki H."/>
            <person name="Oshima A."/>
            <person name="Sasaki N."/>
            <person name="Aotsuka S."/>
            <person name="Yoshikawa Y."/>
            <person name="Matsunawa H."/>
            <person name="Ichihara T."/>
            <person name="Shiohata N."/>
            <person name="Sano S."/>
            <person name="Moriya S."/>
            <person name="Momiyama H."/>
            <person name="Satoh N."/>
            <person name="Takami S."/>
            <person name="Terashima Y."/>
            <person name="Suzuki O."/>
            <person name="Nakagawa S."/>
            <person name="Senoh A."/>
            <person name="Mizoguchi H."/>
            <person name="Goto Y."/>
            <person name="Shimizu F."/>
            <person name="Wakebe H."/>
            <person name="Hishigaki H."/>
            <person name="Watanabe T."/>
            <person name="Sugiyama A."/>
            <person name="Takemoto M."/>
            <person name="Kawakami B."/>
            <person name="Yamazaki M."/>
            <person name="Watanabe K."/>
            <person name="Kumagai A."/>
            <person name="Itakura S."/>
            <person name="Fukuzumi Y."/>
            <person name="Fujimori Y."/>
            <person name="Komiyama M."/>
            <person name="Tashiro H."/>
            <person name="Tanigami A."/>
            <person name="Fujiwara T."/>
            <person name="Ono T."/>
            <person name="Yamada K."/>
            <person name="Fujii Y."/>
            <person name="Ozaki K."/>
            <person name="Hirao M."/>
            <person name="Ohmori Y."/>
            <person name="Kawabata A."/>
            <person name="Hikiji T."/>
            <person name="Kobatake N."/>
            <person name="Inagaki H."/>
            <person name="Ikema Y."/>
            <person name="Okamoto S."/>
            <person name="Okitani R."/>
            <person name="Kawakami T."/>
            <person name="Noguchi S."/>
            <person name="Itoh T."/>
            <person name="Shigeta K."/>
            <person name="Senba T."/>
            <person name="Matsumura K."/>
            <person name="Nakajima Y."/>
            <person name="Mizuno T."/>
            <person name="Morinaga M."/>
            <person name="Sasaki M."/>
            <person name="Togashi T."/>
            <person name="Oyama M."/>
            <person name="Hata H."/>
            <person name="Watanabe M."/>
            <person name="Komatsu T."/>
            <person name="Mizushima-Sugano J."/>
            <person name="Satoh T."/>
            <person name="Shirai Y."/>
            <person name="Takahashi Y."/>
            <person name="Nakagawa K."/>
            <person name="Okumura K."/>
            <person name="Nagase T."/>
            <person name="Nomura N."/>
            <person name="Kikuchi H."/>
            <person name="Masuho Y."/>
            <person name="Yamashita R."/>
            <person name="Nakai K."/>
            <person name="Yada T."/>
            <person name="Nakamura Y."/>
            <person name="Ohara O."/>
            <person name="Isogai T."/>
            <person name="Sugano S."/>
        </authorList>
    </citation>
    <scope>NUCLEOTIDE SEQUENCE [LARGE SCALE MRNA] (ISOFORM 1)</scope>
    <source>
        <tissue>Thymus</tissue>
    </source>
</reference>
<reference key="5">
    <citation type="journal article" date="2007" name="BMC Genomics">
        <title>The full-ORF clone resource of the German cDNA consortium.</title>
        <authorList>
            <person name="Bechtel S."/>
            <person name="Rosenfelder H."/>
            <person name="Duda A."/>
            <person name="Schmidt C.P."/>
            <person name="Ernst U."/>
            <person name="Wellenreuther R."/>
            <person name="Mehrle A."/>
            <person name="Schuster C."/>
            <person name="Bahr A."/>
            <person name="Bloecker H."/>
            <person name="Heubner D."/>
            <person name="Hoerlein A."/>
            <person name="Michel G."/>
            <person name="Wedler H."/>
            <person name="Koehrer K."/>
            <person name="Ottenwaelder B."/>
            <person name="Poustka A."/>
            <person name="Wiemann S."/>
            <person name="Schupp I."/>
        </authorList>
    </citation>
    <scope>NUCLEOTIDE SEQUENCE [LARGE SCALE MRNA] (ISOFORM 5)</scope>
</reference>
<reference key="6">
    <citation type="journal article" date="2004" name="Nature">
        <title>The DNA sequence and comparative analysis of human chromosome 5.</title>
        <authorList>
            <person name="Schmutz J."/>
            <person name="Martin J."/>
            <person name="Terry A."/>
            <person name="Couronne O."/>
            <person name="Grimwood J."/>
            <person name="Lowry S."/>
            <person name="Gordon L.A."/>
            <person name="Scott D."/>
            <person name="Xie G."/>
            <person name="Huang W."/>
            <person name="Hellsten U."/>
            <person name="Tran-Gyamfi M."/>
            <person name="She X."/>
            <person name="Prabhakar S."/>
            <person name="Aerts A."/>
            <person name="Altherr M."/>
            <person name="Bajorek E."/>
            <person name="Black S."/>
            <person name="Branscomb E."/>
            <person name="Caoile C."/>
            <person name="Challacombe J.F."/>
            <person name="Chan Y.M."/>
            <person name="Denys M."/>
            <person name="Detter J.C."/>
            <person name="Escobar J."/>
            <person name="Flowers D."/>
            <person name="Fotopulos D."/>
            <person name="Glavina T."/>
            <person name="Gomez M."/>
            <person name="Gonzales E."/>
            <person name="Goodstein D."/>
            <person name="Grigoriev I."/>
            <person name="Groza M."/>
            <person name="Hammon N."/>
            <person name="Hawkins T."/>
            <person name="Haydu L."/>
            <person name="Israni S."/>
            <person name="Jett J."/>
            <person name="Kadner K."/>
            <person name="Kimball H."/>
            <person name="Kobayashi A."/>
            <person name="Lopez F."/>
            <person name="Lou Y."/>
            <person name="Martinez D."/>
            <person name="Medina C."/>
            <person name="Morgan J."/>
            <person name="Nandkeshwar R."/>
            <person name="Noonan J.P."/>
            <person name="Pitluck S."/>
            <person name="Pollard M."/>
            <person name="Predki P."/>
            <person name="Priest J."/>
            <person name="Ramirez L."/>
            <person name="Retterer J."/>
            <person name="Rodriguez A."/>
            <person name="Rogers S."/>
            <person name="Salamov A."/>
            <person name="Salazar A."/>
            <person name="Thayer N."/>
            <person name="Tice H."/>
            <person name="Tsai M."/>
            <person name="Ustaszewska A."/>
            <person name="Vo N."/>
            <person name="Wheeler J."/>
            <person name="Wu K."/>
            <person name="Yang J."/>
            <person name="Dickson M."/>
            <person name="Cheng J.-F."/>
            <person name="Eichler E.E."/>
            <person name="Olsen A."/>
            <person name="Pennacchio L.A."/>
            <person name="Rokhsar D.S."/>
            <person name="Richardson P."/>
            <person name="Lucas S.M."/>
            <person name="Myers R.M."/>
            <person name="Rubin E.M."/>
        </authorList>
    </citation>
    <scope>NUCLEOTIDE SEQUENCE [LARGE SCALE GENOMIC DNA]</scope>
</reference>
<reference key="7">
    <citation type="journal article" date="2004" name="Genome Res.">
        <title>The status, quality, and expansion of the NIH full-length cDNA project: the Mammalian Gene Collection (MGC).</title>
        <authorList>
            <consortium name="The MGC Project Team"/>
        </authorList>
    </citation>
    <scope>NUCLEOTIDE SEQUENCE [LARGE SCALE MRNA] (ISOFORMS 1 AND 3)</scope>
    <source>
        <tissue>B-cell</tissue>
        <tissue>Lymph</tissue>
    </source>
</reference>
<reference key="8">
    <citation type="journal article" date="2003" name="Int. J. Oncol.">
        <title>MGC29506 gene, frequently down-regulated in intestinal-type gastric cancer, encodes secreted-type protein with conserved cysteine residues.</title>
        <authorList>
            <person name="Katoh M."/>
            <person name="Katoh M."/>
        </authorList>
    </citation>
    <scope>TISSUE SPECIFICITY</scope>
</reference>
<reference key="9">
    <citation type="journal article" date="2011" name="BMC Syst. Biol.">
        <title>Initial characterization of the human central proteome.</title>
        <authorList>
            <person name="Burkard T.R."/>
            <person name="Planyavsky M."/>
            <person name="Kaupe I."/>
            <person name="Breitwieser F.P."/>
            <person name="Buerckstuemmer T."/>
            <person name="Bennett K.L."/>
            <person name="Superti-Furga G."/>
            <person name="Colinge J."/>
        </authorList>
    </citation>
    <scope>IDENTIFICATION BY MASS SPECTROMETRY [LARGE SCALE ANALYSIS]</scope>
</reference>
<reference key="10">
    <citation type="journal article" date="2011" name="Diabetologia">
        <title>Novel hormone-regulated genes in visceral adipose tissue: cloning and identification of proinflammatory cytokine-like mouse and human MEDA-7: implications for obesity, insulin resistance and the metabolic syndrome.</title>
        <authorList>
            <person name="Zhang H."/>
            <person name="Chen X."/>
            <person name="Sairam M.R."/>
        </authorList>
    </citation>
    <scope>SUBCELLULAR LOCATION</scope>
    <scope>INDUCTION</scope>
    <scope>FUNCTION</scope>
</reference>
<organism>
    <name type="scientific">Homo sapiens</name>
    <name type="common">Human</name>
    <dbReference type="NCBI Taxonomy" id="9606"/>
    <lineage>
        <taxon>Eukaryota</taxon>
        <taxon>Metazoa</taxon>
        <taxon>Chordata</taxon>
        <taxon>Craniata</taxon>
        <taxon>Vertebrata</taxon>
        <taxon>Euteleostomi</taxon>
        <taxon>Mammalia</taxon>
        <taxon>Eutheria</taxon>
        <taxon>Euarchontoglires</taxon>
        <taxon>Primates</taxon>
        <taxon>Haplorrhini</taxon>
        <taxon>Catarrhini</taxon>
        <taxon>Hominidae</taxon>
        <taxon>Homo</taxon>
    </lineage>
</organism>
<name>MZB1_HUMAN</name>
<evidence type="ECO:0000250" key="1"/>
<evidence type="ECO:0000255" key="2"/>
<evidence type="ECO:0000255" key="3">
    <source>
        <dbReference type="PROSITE-ProRule" id="PRU10138"/>
    </source>
</evidence>
<evidence type="ECO:0000269" key="4">
    <source>
    </source>
</evidence>
<evidence type="ECO:0000269" key="5">
    <source>
    </source>
</evidence>
<evidence type="ECO:0000269" key="6">
    <source>
    </source>
</evidence>
<evidence type="ECO:0000269" key="7">
    <source>
    </source>
</evidence>
<evidence type="ECO:0000303" key="8">
    <source>
    </source>
</evidence>
<evidence type="ECO:0000303" key="9">
    <source>
    </source>
</evidence>
<evidence type="ECO:0000303" key="10">
    <source>
    </source>
</evidence>
<evidence type="ECO:0000303" key="11">
    <source>
    </source>
</evidence>
<evidence type="ECO:0000305" key="12"/>
<evidence type="ECO:0007829" key="13">
    <source>
        <dbReference type="PDB" id="7AAH"/>
    </source>
</evidence>
<keyword id="KW-0002">3D-structure</keyword>
<keyword id="KW-0025">Alternative splicing</keyword>
<keyword id="KW-0053">Apoptosis</keyword>
<keyword id="KW-0963">Cytoplasm</keyword>
<keyword id="KW-1015">Disulfide bond</keyword>
<keyword id="KW-0256">Endoplasmic reticulum</keyword>
<keyword id="KW-1267">Proteomics identification</keyword>
<keyword id="KW-1185">Reference proteome</keyword>
<keyword id="KW-0964">Secreted</keyword>
<keyword id="KW-0732">Signal</keyword>
<dbReference type="EMBL" id="AF338109">
    <property type="protein sequence ID" value="AAK84085.1"/>
    <property type="molecule type" value="mRNA"/>
</dbReference>
<dbReference type="EMBL" id="AF151024">
    <property type="protein sequence ID" value="AAF36110.1"/>
    <property type="status" value="ALT_SEQ"/>
    <property type="molecule type" value="mRNA"/>
</dbReference>
<dbReference type="EMBL" id="BP366737">
    <property type="status" value="NOT_ANNOTATED_CDS"/>
    <property type="molecule type" value="mRNA"/>
</dbReference>
<dbReference type="EMBL" id="GQ477350">
    <property type="protein sequence ID" value="ACY74343.1"/>
    <property type="molecule type" value="mRNA"/>
</dbReference>
<dbReference type="EMBL" id="AK292706">
    <property type="protein sequence ID" value="BAF85395.1"/>
    <property type="molecule type" value="mRNA"/>
</dbReference>
<dbReference type="EMBL" id="AL698690">
    <property type="status" value="NOT_ANNOTATED_CDS"/>
    <property type="molecule type" value="mRNA"/>
</dbReference>
<dbReference type="EMBL" id="AC135457">
    <property type="status" value="NOT_ANNOTATED_CDS"/>
    <property type="molecule type" value="Genomic_DNA"/>
</dbReference>
<dbReference type="EMBL" id="BC009931">
    <property type="protein sequence ID" value="AAH09931.2"/>
    <property type="molecule type" value="mRNA"/>
</dbReference>
<dbReference type="EMBL" id="BC021275">
    <property type="protein sequence ID" value="AAH21275.1"/>
    <property type="molecule type" value="mRNA"/>
</dbReference>
<dbReference type="CCDS" id="CCDS47273.1">
    <molecule id="Q8WU39-1"/>
</dbReference>
<dbReference type="RefSeq" id="NP_057543.2">
    <molecule id="Q8WU39-1"/>
    <property type="nucleotide sequence ID" value="NM_016459.4"/>
</dbReference>
<dbReference type="PDB" id="7AAH">
    <property type="method" value="X-ray"/>
    <property type="resolution" value="1.40 A"/>
    <property type="chains" value="A/B=23-185"/>
</dbReference>
<dbReference type="PDBsum" id="7AAH"/>
<dbReference type="SMR" id="Q8WU39"/>
<dbReference type="BioGRID" id="119399">
    <property type="interactions" value="12"/>
</dbReference>
<dbReference type="FunCoup" id="Q8WU39">
    <property type="interactions" value="52"/>
</dbReference>
<dbReference type="IntAct" id="Q8WU39">
    <property type="interactions" value="10"/>
</dbReference>
<dbReference type="MINT" id="Q8WU39"/>
<dbReference type="STRING" id="9606.ENSP00000303920"/>
<dbReference type="GlyGen" id="Q8WU39">
    <property type="glycosylation" value="1 site, 1 O-linked glycan (1 site)"/>
</dbReference>
<dbReference type="iPTMnet" id="Q8WU39"/>
<dbReference type="PhosphoSitePlus" id="Q8WU39"/>
<dbReference type="BioMuta" id="MZB1"/>
<dbReference type="DMDM" id="74730663"/>
<dbReference type="jPOST" id="Q8WU39"/>
<dbReference type="MassIVE" id="Q8WU39"/>
<dbReference type="PaxDb" id="9606-ENSP00000303920"/>
<dbReference type="PeptideAtlas" id="Q8WU39"/>
<dbReference type="ProteomicsDB" id="74625">
    <molecule id="Q8WU39-1"/>
</dbReference>
<dbReference type="ProteomicsDB" id="74626">
    <molecule id="Q8WU39-2"/>
</dbReference>
<dbReference type="ProteomicsDB" id="74627">
    <molecule id="Q8WU39-3"/>
</dbReference>
<dbReference type="ProteomicsDB" id="74628">
    <molecule id="Q8WU39-4"/>
</dbReference>
<dbReference type="Antibodypedia" id="26772">
    <property type="antibodies" value="124 antibodies from 24 providers"/>
</dbReference>
<dbReference type="DNASU" id="51237"/>
<dbReference type="Ensembl" id="ENST00000302125.9">
    <molecule id="Q8WU39-1"/>
    <property type="protein sequence ID" value="ENSP00000303920.8"/>
    <property type="gene ID" value="ENSG00000170476.16"/>
</dbReference>
<dbReference type="Ensembl" id="ENST00000417694.6">
    <molecule id="Q8WU39-4"/>
    <property type="protein sequence ID" value="ENSP00000415420.2"/>
    <property type="gene ID" value="ENSG00000170476.16"/>
</dbReference>
<dbReference type="Ensembl" id="ENST00000503481.5">
    <molecule id="Q8WU39-2"/>
    <property type="protein sequence ID" value="ENSP00000423205.1"/>
    <property type="gene ID" value="ENSG00000170476.16"/>
</dbReference>
<dbReference type="GeneID" id="51237"/>
<dbReference type="KEGG" id="hsa:51237"/>
<dbReference type="MANE-Select" id="ENST00000302125.9">
    <property type="protein sequence ID" value="ENSP00000303920.8"/>
    <property type="RefSeq nucleotide sequence ID" value="NM_016459.4"/>
    <property type="RefSeq protein sequence ID" value="NP_057543.2"/>
</dbReference>
<dbReference type="UCSC" id="uc003lei.4">
    <molecule id="Q8WU39-1"/>
    <property type="organism name" value="human"/>
</dbReference>
<dbReference type="AGR" id="HGNC:30125"/>
<dbReference type="CTD" id="51237"/>
<dbReference type="DisGeNET" id="51237"/>
<dbReference type="GeneCards" id="MZB1"/>
<dbReference type="HGNC" id="HGNC:30125">
    <property type="gene designation" value="MZB1"/>
</dbReference>
<dbReference type="HPA" id="ENSG00000170476">
    <property type="expression patterns" value="Tissue enhanced (intestine, lymphoid tissue)"/>
</dbReference>
<dbReference type="MIM" id="609447">
    <property type="type" value="gene"/>
</dbReference>
<dbReference type="neXtProt" id="NX_Q8WU39"/>
<dbReference type="OpenTargets" id="ENSG00000170476"/>
<dbReference type="VEuPathDB" id="HostDB:ENSG00000170476"/>
<dbReference type="eggNOG" id="ENOG502S4B7">
    <property type="taxonomic scope" value="Eukaryota"/>
</dbReference>
<dbReference type="GeneTree" id="ENSGT00390000002716"/>
<dbReference type="HOGENOM" id="CLU_2014477_0_0_1"/>
<dbReference type="InParanoid" id="Q8WU39"/>
<dbReference type="OMA" id="QNWQDYG"/>
<dbReference type="OrthoDB" id="448621at2759"/>
<dbReference type="PAN-GO" id="Q8WU39">
    <property type="GO annotations" value="3 GO annotations based on evolutionary models"/>
</dbReference>
<dbReference type="PhylomeDB" id="Q8WU39"/>
<dbReference type="PathwayCommons" id="Q8WU39"/>
<dbReference type="SignaLink" id="Q8WU39"/>
<dbReference type="BioGRID-ORCS" id="51237">
    <property type="hits" value="12 hits in 1141 CRISPR screens"/>
</dbReference>
<dbReference type="ChiTaRS" id="MZB1">
    <property type="organism name" value="human"/>
</dbReference>
<dbReference type="GenomeRNAi" id="51237"/>
<dbReference type="Pharos" id="Q8WU39">
    <property type="development level" value="Tbio"/>
</dbReference>
<dbReference type="PRO" id="PR:Q8WU39"/>
<dbReference type="Proteomes" id="UP000005640">
    <property type="component" value="Chromosome 5"/>
</dbReference>
<dbReference type="RNAct" id="Q8WU39">
    <property type="molecule type" value="protein"/>
</dbReference>
<dbReference type="Bgee" id="ENSG00000170476">
    <property type="expression patterns" value="Expressed in thymus and 135 other cell types or tissues"/>
</dbReference>
<dbReference type="ExpressionAtlas" id="Q8WU39">
    <property type="expression patterns" value="baseline and differential"/>
</dbReference>
<dbReference type="GO" id="GO:0005737">
    <property type="term" value="C:cytoplasm"/>
    <property type="evidence" value="ECO:0000314"/>
    <property type="project" value="UniProtKB"/>
</dbReference>
<dbReference type="GO" id="GO:0034663">
    <property type="term" value="C:endoplasmic reticulum chaperone complex"/>
    <property type="evidence" value="ECO:0000250"/>
    <property type="project" value="UniProtKB"/>
</dbReference>
<dbReference type="GO" id="GO:0005788">
    <property type="term" value="C:endoplasmic reticulum lumen"/>
    <property type="evidence" value="ECO:0000250"/>
    <property type="project" value="UniProtKB"/>
</dbReference>
<dbReference type="GO" id="GO:0005576">
    <property type="term" value="C:extracellular region"/>
    <property type="evidence" value="ECO:0000314"/>
    <property type="project" value="UniProtKB"/>
</dbReference>
<dbReference type="GO" id="GO:0006915">
    <property type="term" value="P:apoptotic process"/>
    <property type="evidence" value="ECO:0007669"/>
    <property type="project" value="UniProtKB-KW"/>
</dbReference>
<dbReference type="GO" id="GO:0033622">
    <property type="term" value="P:integrin activation"/>
    <property type="evidence" value="ECO:0000250"/>
    <property type="project" value="UniProtKB"/>
</dbReference>
<dbReference type="GO" id="GO:0008284">
    <property type="term" value="P:positive regulation of cell population proliferation"/>
    <property type="evidence" value="ECO:0000314"/>
    <property type="project" value="UniProtKB"/>
</dbReference>
<dbReference type="GO" id="GO:0002639">
    <property type="term" value="P:positive regulation of immunoglobulin production"/>
    <property type="evidence" value="ECO:0000250"/>
    <property type="project" value="UniProtKB"/>
</dbReference>
<dbReference type="GO" id="GO:0030888">
    <property type="term" value="P:regulation of B cell proliferation"/>
    <property type="evidence" value="ECO:0000250"/>
    <property type="project" value="UniProtKB"/>
</dbReference>
<dbReference type="GO" id="GO:0042127">
    <property type="term" value="P:regulation of cell population proliferation"/>
    <property type="evidence" value="ECO:0000250"/>
    <property type="project" value="UniProtKB"/>
</dbReference>
<dbReference type="GO" id="GO:0046626">
    <property type="term" value="P:regulation of insulin receptor signaling pathway"/>
    <property type="evidence" value="ECO:0000250"/>
    <property type="project" value="UniProtKB"/>
</dbReference>
<dbReference type="InterPro" id="IPR021852">
    <property type="entry name" value="DUF3456"/>
</dbReference>
<dbReference type="InterPro" id="IPR052682">
    <property type="entry name" value="MZB1"/>
</dbReference>
<dbReference type="PANTHER" id="PTHR15881">
    <property type="entry name" value="MARGINAL ZONE B- AND B1-CELL-SPECIFIC PROTEIN"/>
    <property type="match status" value="1"/>
</dbReference>
<dbReference type="PANTHER" id="PTHR15881:SF2">
    <property type="entry name" value="MARGINAL ZONE B- AND B1-CELL-SPECIFIC PROTEIN"/>
    <property type="match status" value="1"/>
</dbReference>
<dbReference type="Pfam" id="PF11938">
    <property type="entry name" value="DUF3456"/>
    <property type="match status" value="1"/>
</dbReference>
<dbReference type="PROSITE" id="PS00014">
    <property type="entry name" value="ER_TARGET"/>
    <property type="match status" value="1"/>
</dbReference>
<sequence>MRLSLPLLLLLLGAWAIPGGLGDRAPLTATAPQLDDEEMYSAHMPAHLRCDACRAVAYQMWQNLAKAETKLHTSNSGGRRELSELVYTDVLDRSCSRNWQDYGVREVDQVKRLTGPGLSEGPEPSISVMVTGGPWPTRLSRTCLHYLGEFGEDQIYEAHQQGRGALEALLCGGPQGACSEKVSATREEL</sequence>